<keyword id="KW-0539">Nucleus</keyword>
<keyword id="KW-1185">Reference proteome</keyword>
<keyword id="KW-0690">Ribosome biogenesis</keyword>
<keyword id="KW-0698">rRNA processing</keyword>
<feature type="chain" id="PRO_0000374004" description="rRNA-processing protein fcf2">
    <location>
        <begin position="1"/>
        <end position="230"/>
    </location>
</feature>
<feature type="region of interest" description="Disordered" evidence="2">
    <location>
        <begin position="209"/>
        <end position="230"/>
    </location>
</feature>
<feature type="compositionally biased region" description="Basic residues" evidence="2">
    <location>
        <begin position="210"/>
        <end position="230"/>
    </location>
</feature>
<reference key="1">
    <citation type="journal article" date="2002" name="Nature">
        <title>The genome sequence of Schizosaccharomyces pombe.</title>
        <authorList>
            <person name="Wood V."/>
            <person name="Gwilliam R."/>
            <person name="Rajandream M.A."/>
            <person name="Lyne M.H."/>
            <person name="Lyne R."/>
            <person name="Stewart A."/>
            <person name="Sgouros J.G."/>
            <person name="Peat N."/>
            <person name="Hayles J."/>
            <person name="Baker S.G."/>
            <person name="Basham D."/>
            <person name="Bowman S."/>
            <person name="Brooks K."/>
            <person name="Brown D."/>
            <person name="Brown S."/>
            <person name="Chillingworth T."/>
            <person name="Churcher C.M."/>
            <person name="Collins M."/>
            <person name="Connor R."/>
            <person name="Cronin A."/>
            <person name="Davis P."/>
            <person name="Feltwell T."/>
            <person name="Fraser A."/>
            <person name="Gentles S."/>
            <person name="Goble A."/>
            <person name="Hamlin N."/>
            <person name="Harris D.E."/>
            <person name="Hidalgo J."/>
            <person name="Hodgson G."/>
            <person name="Holroyd S."/>
            <person name="Hornsby T."/>
            <person name="Howarth S."/>
            <person name="Huckle E.J."/>
            <person name="Hunt S."/>
            <person name="Jagels K."/>
            <person name="James K.D."/>
            <person name="Jones L."/>
            <person name="Jones M."/>
            <person name="Leather S."/>
            <person name="McDonald S."/>
            <person name="McLean J."/>
            <person name="Mooney P."/>
            <person name="Moule S."/>
            <person name="Mungall K.L."/>
            <person name="Murphy L.D."/>
            <person name="Niblett D."/>
            <person name="Odell C."/>
            <person name="Oliver K."/>
            <person name="O'Neil S."/>
            <person name="Pearson D."/>
            <person name="Quail M.A."/>
            <person name="Rabbinowitsch E."/>
            <person name="Rutherford K.M."/>
            <person name="Rutter S."/>
            <person name="Saunders D."/>
            <person name="Seeger K."/>
            <person name="Sharp S."/>
            <person name="Skelton J."/>
            <person name="Simmonds M.N."/>
            <person name="Squares R."/>
            <person name="Squares S."/>
            <person name="Stevens K."/>
            <person name="Taylor K."/>
            <person name="Taylor R.G."/>
            <person name="Tivey A."/>
            <person name="Walsh S.V."/>
            <person name="Warren T."/>
            <person name="Whitehead S."/>
            <person name="Woodward J.R."/>
            <person name="Volckaert G."/>
            <person name="Aert R."/>
            <person name="Robben J."/>
            <person name="Grymonprez B."/>
            <person name="Weltjens I."/>
            <person name="Vanstreels E."/>
            <person name="Rieger M."/>
            <person name="Schaefer M."/>
            <person name="Mueller-Auer S."/>
            <person name="Gabel C."/>
            <person name="Fuchs M."/>
            <person name="Duesterhoeft A."/>
            <person name="Fritzc C."/>
            <person name="Holzer E."/>
            <person name="Moestl D."/>
            <person name="Hilbert H."/>
            <person name="Borzym K."/>
            <person name="Langer I."/>
            <person name="Beck A."/>
            <person name="Lehrach H."/>
            <person name="Reinhardt R."/>
            <person name="Pohl T.M."/>
            <person name="Eger P."/>
            <person name="Zimmermann W."/>
            <person name="Wedler H."/>
            <person name="Wambutt R."/>
            <person name="Purnelle B."/>
            <person name="Goffeau A."/>
            <person name="Cadieu E."/>
            <person name="Dreano S."/>
            <person name="Gloux S."/>
            <person name="Lelaure V."/>
            <person name="Mottier S."/>
            <person name="Galibert F."/>
            <person name="Aves S.J."/>
            <person name="Xiang Z."/>
            <person name="Hunt C."/>
            <person name="Moore K."/>
            <person name="Hurst S.M."/>
            <person name="Lucas M."/>
            <person name="Rochet M."/>
            <person name="Gaillardin C."/>
            <person name="Tallada V.A."/>
            <person name="Garzon A."/>
            <person name="Thode G."/>
            <person name="Daga R.R."/>
            <person name="Cruzado L."/>
            <person name="Jimenez J."/>
            <person name="Sanchez M."/>
            <person name="del Rey F."/>
            <person name="Benito J."/>
            <person name="Dominguez A."/>
            <person name="Revuelta J.L."/>
            <person name="Moreno S."/>
            <person name="Armstrong J."/>
            <person name="Forsburg S.L."/>
            <person name="Cerutti L."/>
            <person name="Lowe T."/>
            <person name="McCombie W.R."/>
            <person name="Paulsen I."/>
            <person name="Potashkin J."/>
            <person name="Shpakovski G.V."/>
            <person name="Ussery D."/>
            <person name="Barrell B.G."/>
            <person name="Nurse P."/>
        </authorList>
    </citation>
    <scope>NUCLEOTIDE SEQUENCE [LARGE SCALE GENOMIC DNA]</scope>
    <source>
        <strain>972 / ATCC 24843</strain>
    </source>
</reference>
<reference key="2">
    <citation type="journal article" date="2006" name="Nat. Biotechnol.">
        <title>ORFeome cloning and global analysis of protein localization in the fission yeast Schizosaccharomyces pombe.</title>
        <authorList>
            <person name="Matsuyama A."/>
            <person name="Arai R."/>
            <person name="Yashiroda Y."/>
            <person name="Shirai A."/>
            <person name="Kamata A."/>
            <person name="Sekido S."/>
            <person name="Kobayashi Y."/>
            <person name="Hashimoto A."/>
            <person name="Hamamoto M."/>
            <person name="Hiraoka Y."/>
            <person name="Horinouchi S."/>
            <person name="Yoshida M."/>
        </authorList>
    </citation>
    <scope>SUBCELLULAR LOCATION [LARGE SCALE ANALYSIS]</scope>
</reference>
<comment type="function">
    <text evidence="1">Involved in pre-rRNA processing and 40S ribosomal subunit assembly. Required for the early cleavage steps of 35S rRNA at the A(0), A(1), and A(2) sites (By similarity).</text>
</comment>
<comment type="subcellular location">
    <subcellularLocation>
        <location evidence="3">Nucleus</location>
        <location evidence="3">Nucleolus</location>
    </subcellularLocation>
</comment>
<comment type="similarity">
    <text evidence="4">Belongs to the FCF2 family.</text>
</comment>
<evidence type="ECO:0000250" key="1"/>
<evidence type="ECO:0000256" key="2">
    <source>
        <dbReference type="SAM" id="MobiDB-lite"/>
    </source>
</evidence>
<evidence type="ECO:0000269" key="3">
    <source>
    </source>
</evidence>
<evidence type="ECO:0000305" key="4"/>
<organism>
    <name type="scientific">Schizosaccharomyces pombe (strain 972 / ATCC 24843)</name>
    <name type="common">Fission yeast</name>
    <dbReference type="NCBI Taxonomy" id="284812"/>
    <lineage>
        <taxon>Eukaryota</taxon>
        <taxon>Fungi</taxon>
        <taxon>Dikarya</taxon>
        <taxon>Ascomycota</taxon>
        <taxon>Taphrinomycotina</taxon>
        <taxon>Schizosaccharomycetes</taxon>
        <taxon>Schizosaccharomycetales</taxon>
        <taxon>Schizosaccharomycetaceae</taxon>
        <taxon>Schizosaccharomyces</taxon>
    </lineage>
</organism>
<accession>O42877</accession>
<name>FCF2_SCHPO</name>
<sequence length="230" mass="26678">MTEIGLSVDLATISKLLESAKSTLQEKQASDDDKHGQQKLLTKIPKIISSSFELPSYFEKKFVMGLKKDELVENSESYINDASFEPTVPIYESHVSAPGISKKKKNIKDTAGSNWFDMPATELTESVKRDIQLLKMRNALDPKRHYRRENTKSMPKYFQVGSIVEGPQDFYSSRIPTRERKETIVDELLHDSERRSYFKKKYLELQKSKMSGRKGQYKKLQQRRKPSYLK</sequence>
<dbReference type="EMBL" id="CU329670">
    <property type="protein sequence ID" value="CAA15924.1"/>
    <property type="molecule type" value="Genomic_DNA"/>
</dbReference>
<dbReference type="PIR" id="T11651">
    <property type="entry name" value="T11651"/>
</dbReference>
<dbReference type="RefSeq" id="NP_594087.3">
    <property type="nucleotide sequence ID" value="NM_001019498.2"/>
</dbReference>
<dbReference type="SMR" id="O42877"/>
<dbReference type="BioGRID" id="279678">
    <property type="interactions" value="40"/>
</dbReference>
<dbReference type="FunCoup" id="O42877">
    <property type="interactions" value="131"/>
</dbReference>
<dbReference type="STRING" id="284812.O42877"/>
<dbReference type="iPTMnet" id="O42877"/>
<dbReference type="PaxDb" id="4896-SPAC3G9.15c.1"/>
<dbReference type="EnsemblFungi" id="SPAC3G9.15c.1">
    <property type="protein sequence ID" value="SPAC3G9.15c.1:pep"/>
    <property type="gene ID" value="SPAC3G9.15c"/>
</dbReference>
<dbReference type="GeneID" id="2543250"/>
<dbReference type="KEGG" id="spo:2543250"/>
<dbReference type="PomBase" id="SPAC3G9.15c">
    <property type="gene designation" value="fcf2"/>
</dbReference>
<dbReference type="VEuPathDB" id="FungiDB:SPAC3G9.15c"/>
<dbReference type="eggNOG" id="KOG3100">
    <property type="taxonomic scope" value="Eukaryota"/>
</dbReference>
<dbReference type="HOGENOM" id="CLU_075129_1_0_1"/>
<dbReference type="InParanoid" id="O42877"/>
<dbReference type="OMA" id="PKRHYRR"/>
<dbReference type="PhylomeDB" id="O42877"/>
<dbReference type="PRO" id="PR:O42877"/>
<dbReference type="Proteomes" id="UP000002485">
    <property type="component" value="Chromosome I"/>
</dbReference>
<dbReference type="GO" id="GO:0005730">
    <property type="term" value="C:nucleolus"/>
    <property type="evidence" value="ECO:0007005"/>
    <property type="project" value="PomBase"/>
</dbReference>
<dbReference type="GO" id="GO:0005634">
    <property type="term" value="C:nucleus"/>
    <property type="evidence" value="ECO:0007005"/>
    <property type="project" value="PomBase"/>
</dbReference>
<dbReference type="GO" id="GO:0006396">
    <property type="term" value="P:RNA processing"/>
    <property type="evidence" value="ECO:0000318"/>
    <property type="project" value="GO_Central"/>
</dbReference>
<dbReference type="GO" id="GO:0006364">
    <property type="term" value="P:rRNA processing"/>
    <property type="evidence" value="ECO:0000266"/>
    <property type="project" value="PomBase"/>
</dbReference>
<dbReference type="InterPro" id="IPR039883">
    <property type="entry name" value="Fcf2/DNTTIP2"/>
</dbReference>
<dbReference type="InterPro" id="IPR014810">
    <property type="entry name" value="Fcf2_C"/>
</dbReference>
<dbReference type="PANTHER" id="PTHR21686">
    <property type="entry name" value="DEOXYNUCLEOTIDYLTRANSFERASE TERMINAL-INTERACTING PROTEIN 2"/>
    <property type="match status" value="1"/>
</dbReference>
<dbReference type="PANTHER" id="PTHR21686:SF12">
    <property type="entry name" value="DEOXYNUCLEOTIDYLTRANSFERASE TERMINAL-INTERACTING PROTEIN 2"/>
    <property type="match status" value="1"/>
</dbReference>
<dbReference type="Pfam" id="PF08698">
    <property type="entry name" value="Fcf2"/>
    <property type="match status" value="1"/>
</dbReference>
<gene>
    <name type="primary">fcf2</name>
    <name type="ORF">SPAC3G9.15c</name>
</gene>
<proteinExistence type="inferred from homology"/>
<protein>
    <recommendedName>
        <fullName>rRNA-processing protein fcf2</fullName>
    </recommendedName>
</protein>